<name>YN8P_YEAST</name>
<gene>
    <name type="ordered locus">YNR042W</name>
    <name type="ORF">N3423</name>
</gene>
<reference key="1">
    <citation type="journal article" date="1997" name="Nature">
        <title>The nucleotide sequence of Saccharomyces cerevisiae chromosome XIV and its evolutionary implications.</title>
        <authorList>
            <person name="Philippsen P."/>
            <person name="Kleine K."/>
            <person name="Poehlmann R."/>
            <person name="Duesterhoeft A."/>
            <person name="Hamberg K."/>
            <person name="Hegemann J.H."/>
            <person name="Obermaier B."/>
            <person name="Urrestarazu L.A."/>
            <person name="Aert R."/>
            <person name="Albermann K."/>
            <person name="Altmann R."/>
            <person name="Andre B."/>
            <person name="Baladron V."/>
            <person name="Ballesta J.P.G."/>
            <person name="Becam A.-M."/>
            <person name="Beinhauer J.D."/>
            <person name="Boskovic J."/>
            <person name="Buitrago M.J."/>
            <person name="Bussereau F."/>
            <person name="Coster F."/>
            <person name="Crouzet M."/>
            <person name="D'Angelo M."/>
            <person name="Dal Pero F."/>
            <person name="De Antoni A."/>
            <person name="del Rey F."/>
            <person name="Doignon F."/>
            <person name="Domdey H."/>
            <person name="Dubois E."/>
            <person name="Fiedler T.A."/>
            <person name="Fleig U."/>
            <person name="Floeth M."/>
            <person name="Fritz C."/>
            <person name="Gaillardin C."/>
            <person name="Garcia-Cantalejo J.M."/>
            <person name="Glansdorff N."/>
            <person name="Goffeau A."/>
            <person name="Gueldener U."/>
            <person name="Herbert C.J."/>
            <person name="Heumann K."/>
            <person name="Heuss-Neitzel D."/>
            <person name="Hilbert H."/>
            <person name="Hinni K."/>
            <person name="Iraqui Houssaini I."/>
            <person name="Jacquet M."/>
            <person name="Jimenez A."/>
            <person name="Jonniaux J.-L."/>
            <person name="Karpfinger-Hartl L."/>
            <person name="Lanfranchi G."/>
            <person name="Lepingle A."/>
            <person name="Levesque H."/>
            <person name="Lyck R."/>
            <person name="Maftahi M."/>
            <person name="Mallet L."/>
            <person name="Maurer C.T.C."/>
            <person name="Messenguy F."/>
            <person name="Mewes H.-W."/>
            <person name="Moestl D."/>
            <person name="Nasr F."/>
            <person name="Nicaud J.-M."/>
            <person name="Niedenthal R.K."/>
            <person name="Pandolfo D."/>
            <person name="Pierard A."/>
            <person name="Piravandi E."/>
            <person name="Planta R.J."/>
            <person name="Pohl T.M."/>
            <person name="Purnelle B."/>
            <person name="Rebischung C."/>
            <person name="Remacha M.A."/>
            <person name="Revuelta J.L."/>
            <person name="Rinke M."/>
            <person name="Saiz J.E."/>
            <person name="Sartorello F."/>
            <person name="Scherens B."/>
            <person name="Sen-Gupta M."/>
            <person name="Soler-Mira A."/>
            <person name="Urbanus J.H.M."/>
            <person name="Valle G."/>
            <person name="Van Dyck L."/>
            <person name="Verhasselt P."/>
            <person name="Vierendeels F."/>
            <person name="Vissers S."/>
            <person name="Voet M."/>
            <person name="Volckaert G."/>
            <person name="Wach A."/>
            <person name="Wambutt R."/>
            <person name="Wedler H."/>
            <person name="Zollner A."/>
            <person name="Hani J."/>
        </authorList>
    </citation>
    <scope>NUCLEOTIDE SEQUENCE [LARGE SCALE GENOMIC DNA]</scope>
    <source>
        <strain>ATCC 204508 / S288c</strain>
    </source>
</reference>
<reference key="2">
    <citation type="journal article" date="2014" name="G3 (Bethesda)">
        <title>The reference genome sequence of Saccharomyces cerevisiae: Then and now.</title>
        <authorList>
            <person name="Engel S.R."/>
            <person name="Dietrich F.S."/>
            <person name="Fisk D.G."/>
            <person name="Binkley G."/>
            <person name="Balakrishnan R."/>
            <person name="Costanzo M.C."/>
            <person name="Dwight S.S."/>
            <person name="Hitz B.C."/>
            <person name="Karra K."/>
            <person name="Nash R.S."/>
            <person name="Weng S."/>
            <person name="Wong E.D."/>
            <person name="Lloyd P."/>
            <person name="Skrzypek M.S."/>
            <person name="Miyasato S.R."/>
            <person name="Simison M."/>
            <person name="Cherry J.M."/>
        </authorList>
    </citation>
    <scope>GENOME REANNOTATION</scope>
    <source>
        <strain>ATCC 204508 / S288c</strain>
    </source>
</reference>
<reference key="3">
    <citation type="journal article" date="2007" name="Genome Res.">
        <title>Approaching a complete repository of sequence-verified protein-encoding clones for Saccharomyces cerevisiae.</title>
        <authorList>
            <person name="Hu Y."/>
            <person name="Rolfs A."/>
            <person name="Bhullar B."/>
            <person name="Murthy T.V.S."/>
            <person name="Zhu C."/>
            <person name="Berger M.F."/>
            <person name="Camargo A.A."/>
            <person name="Kelley F."/>
            <person name="McCarron S."/>
            <person name="Jepson D."/>
            <person name="Richardson A."/>
            <person name="Raphael J."/>
            <person name="Moreira D."/>
            <person name="Taycher E."/>
            <person name="Zuo D."/>
            <person name="Mohr S."/>
            <person name="Kane M.F."/>
            <person name="Williamson J."/>
            <person name="Simpson A.J.G."/>
            <person name="Bulyk M.L."/>
            <person name="Harlow E."/>
            <person name="Marsischky G."/>
            <person name="Kolodner R.D."/>
            <person name="LaBaer J."/>
        </authorList>
    </citation>
    <scope>NUCLEOTIDE SEQUENCE [GENOMIC DNA]</scope>
    <source>
        <strain>ATCC 204508 / S288c</strain>
    </source>
</reference>
<dbReference type="EMBL" id="Z71656">
    <property type="protein sequence ID" value="CAA96322.1"/>
    <property type="molecule type" value="Genomic_DNA"/>
</dbReference>
<dbReference type="EMBL" id="AY693360">
    <property type="protein sequence ID" value="AAT93379.1"/>
    <property type="molecule type" value="Genomic_DNA"/>
</dbReference>
<dbReference type="PIR" id="S63373">
    <property type="entry name" value="S63373"/>
</dbReference>
<dbReference type="DIP" id="DIP-3955N"/>
<dbReference type="IntAct" id="P53737">
    <property type="interactions" value="1"/>
</dbReference>
<dbReference type="PaxDb" id="4932-YNR042W"/>
<dbReference type="EnsemblFungi" id="YNR042W_mRNA">
    <property type="protein sequence ID" value="YNR042W"/>
    <property type="gene ID" value="YNR042W"/>
</dbReference>
<dbReference type="AGR" id="SGD:S000005325"/>
<dbReference type="SGD" id="S000005325">
    <property type="gene designation" value="YNR042W"/>
</dbReference>
<dbReference type="HOGENOM" id="CLU_1817318_0_0_1"/>
<evidence type="ECO:0000305" key="1"/>
<evidence type="ECO:0000305" key="2">
    <source>
    </source>
</evidence>
<proteinExistence type="uncertain"/>
<accession>P53737</accession>
<comment type="miscellaneous">
    <text evidence="1">Almost completely overlaps COQ2.</text>
</comment>
<comment type="caution">
    <text evidence="2">Product of a dubious gene prediction unlikely to encode a functional protein. Because of that it is not part of the S.cerevisiae S288c complete/reference proteome set.</text>
</comment>
<organism>
    <name type="scientific">Saccharomyces cerevisiae (strain ATCC 204508 / S288c)</name>
    <name type="common">Baker's yeast</name>
    <dbReference type="NCBI Taxonomy" id="559292"/>
    <lineage>
        <taxon>Eukaryota</taxon>
        <taxon>Fungi</taxon>
        <taxon>Dikarya</taxon>
        <taxon>Ascomycota</taxon>
        <taxon>Saccharomycotina</taxon>
        <taxon>Saccharomycetes</taxon>
        <taxon>Saccharomycetales</taxon>
        <taxon>Saccharomycetaceae</taxon>
        <taxon>Saccharomyces</taxon>
    </lineage>
</organism>
<sequence length="142" mass="15316">MVQPAPLITNAPTPKIPNIPAVALNVAPCIMAPISIDQLQGKYNSHVPTGFSSLISSAYGIHFLGSRDTNGPSPSNLSFLATSNSFDVNTGADSFEEGEEEEEEEDVYLFLLLPMIPATVTRPLPRMDLPSKILFLCQINIS</sequence>
<feature type="chain" id="PRO_0000203479" description="Putative uncharacterized protein YNR042W">
    <location>
        <begin position="1"/>
        <end position="142"/>
    </location>
</feature>
<protein>
    <recommendedName>
        <fullName>Putative uncharacterized protein YNR042W</fullName>
    </recommendedName>
</protein>